<protein>
    <recommendedName>
        <fullName evidence="2">Defensin gallicin</fullName>
    </recommendedName>
</protein>
<reference key="1">
    <citation type="journal article" date="2006" name="Mutat. Res.">
        <title>Development of mussel mRNA profiling: Can gene expression trends reveal coastal water pollution?</title>
        <authorList>
            <person name="Venier P."/>
            <person name="De Pitta C."/>
            <person name="Pallavicini A."/>
            <person name="Marsano F."/>
            <person name="Varotto L."/>
            <person name="Romualdi C."/>
            <person name="Dondero F."/>
            <person name="Viarengo A."/>
            <person name="Lanfranchi G."/>
        </authorList>
    </citation>
    <scope>NUCLEOTIDE SEQUENCE [MRNA]</scope>
    <scope>TISSUE SPECIFICITY</scope>
</reference>
<reference key="2">
    <citation type="journal article" date="2010" name="Science">
        <title>Plectasin, a fungal defensin, targets the bacterial cell wall precursor Lipid II.</title>
        <authorList>
            <person name="Schneider T."/>
            <person name="Kruse T."/>
            <person name="Wimmer R."/>
            <person name="Wiedemann I."/>
            <person name="Sass V."/>
            <person name="Pag U."/>
            <person name="Jansen A."/>
            <person name="Nielsen A.K."/>
            <person name="Mygind P.H."/>
            <person name="Raventos D.S."/>
            <person name="Neve S."/>
            <person name="Ravn B."/>
            <person name="Bonvin A.M."/>
            <person name="De Maria L."/>
            <person name="Andersen A.S."/>
            <person name="Gammelgaard L.K."/>
            <person name="Sahl H.G."/>
            <person name="Kristensen H.H."/>
        </authorList>
    </citation>
    <scope>FUNCTION</scope>
    <scope>BINDING TO LIPID II</scope>
</reference>
<organism>
    <name type="scientific">Mytilus galloprovincialis</name>
    <name type="common">Mediterranean mussel</name>
    <dbReference type="NCBI Taxonomy" id="29158"/>
    <lineage>
        <taxon>Eukaryota</taxon>
        <taxon>Metazoa</taxon>
        <taxon>Spiralia</taxon>
        <taxon>Lophotrochozoa</taxon>
        <taxon>Mollusca</taxon>
        <taxon>Bivalvia</taxon>
        <taxon>Autobranchia</taxon>
        <taxon>Pteriomorphia</taxon>
        <taxon>Mytilida</taxon>
        <taxon>Mytiloidea</taxon>
        <taxon>Mytilidae</taxon>
        <taxon>Mytilinae</taxon>
        <taxon>Mytilus</taxon>
    </lineage>
</organism>
<dbReference type="EMBL" id="AJ624472">
    <property type="status" value="NOT_ANNOTATED_CDS"/>
    <property type="molecule type" value="mRNA"/>
</dbReference>
<dbReference type="GO" id="GO:0005576">
    <property type="term" value="C:extracellular region"/>
    <property type="evidence" value="ECO:0007669"/>
    <property type="project" value="UniProtKB-SubCell"/>
</dbReference>
<dbReference type="GO" id="GO:0016020">
    <property type="term" value="C:membrane"/>
    <property type="evidence" value="ECO:0007669"/>
    <property type="project" value="UniProtKB-KW"/>
</dbReference>
<dbReference type="GO" id="GO:0044218">
    <property type="term" value="C:other organism cell membrane"/>
    <property type="evidence" value="ECO:0007669"/>
    <property type="project" value="UniProtKB-KW"/>
</dbReference>
<dbReference type="GO" id="GO:0008289">
    <property type="term" value="F:lipid binding"/>
    <property type="evidence" value="ECO:0007669"/>
    <property type="project" value="UniProtKB-KW"/>
</dbReference>
<dbReference type="GO" id="GO:0042742">
    <property type="term" value="P:defense response to bacterium"/>
    <property type="evidence" value="ECO:0007669"/>
    <property type="project" value="UniProtKB-KW"/>
</dbReference>
<dbReference type="GO" id="GO:0045087">
    <property type="term" value="P:innate immune response"/>
    <property type="evidence" value="ECO:0007669"/>
    <property type="project" value="UniProtKB-KW"/>
</dbReference>
<evidence type="ECO:0000269" key="1">
    <source>
    </source>
</evidence>
<evidence type="ECO:0000303" key="2">
    <source>
    </source>
</evidence>
<evidence type="ECO:0000305" key="3"/>
<evidence type="ECO:0000305" key="4">
    <source>
    </source>
</evidence>
<sequence>MWIESDAGVAIDRHARGACSLGEAGCATYCFYQGKHHGGCCGENYTKCLGTCYCNGSGYEYRCHSCDL</sequence>
<feature type="signal peptide" evidence="3">
    <location>
        <begin position="1"/>
        <end position="16"/>
    </location>
</feature>
<feature type="chain" id="PRO_0000449379" description="Defensin gallicin" evidence="4">
    <location>
        <begin position="17"/>
        <end position="68"/>
    </location>
</feature>
<keyword id="KW-0044">Antibiotic</keyword>
<keyword id="KW-0929">Antimicrobial</keyword>
<keyword id="KW-0211">Defensin</keyword>
<keyword id="KW-1015">Disulfide bond</keyword>
<keyword id="KW-0391">Immunity</keyword>
<keyword id="KW-0399">Innate immunity</keyword>
<keyword id="KW-0446">Lipid-binding</keyword>
<keyword id="KW-0472">Membrane</keyword>
<keyword id="KW-0964">Secreted</keyword>
<keyword id="KW-0732">Signal</keyword>
<keyword id="KW-1052">Target cell membrane</keyword>
<keyword id="KW-1053">Target membrane</keyword>
<proteinExistence type="evidence at protein level"/>
<comment type="function">
    <text evidence="4">Shows antibacterial activity against numerous Gram-positive bacteria (Probable). It selectively inhibits peptidoglycan biosynthesis through complex formation with the cell wall precursor lipid II (1:1 molar ratio) thus inhibiting cell wall synthesis (PubMed:20508130).</text>
</comment>
<comment type="subcellular location">
    <subcellularLocation>
        <location evidence="3">Secreted</location>
    </subcellularLocation>
    <subcellularLocation>
        <location evidence="4">Target cell membrane</location>
    </subcellularLocation>
</comment>
<comment type="tissue specificity">
    <text evidence="1">Expressed in hemolymph, gills, digestive gland, foot, adductor muscles and mantle.</text>
</comment>
<comment type="PTM">
    <text evidence="3">Contains 5 disulfide bonds.</text>
</comment>
<name>DEFGA_MYTGA</name>
<accession>P00000</accession>